<reference key="1">
    <citation type="submission" date="2008-01" db="EMBL/GenBank/DDBJ databases">
        <title>Complete sequence of Shewanella halifaxensis HAW-EB4.</title>
        <authorList>
            <consortium name="US DOE Joint Genome Institute"/>
            <person name="Copeland A."/>
            <person name="Lucas S."/>
            <person name="Lapidus A."/>
            <person name="Glavina del Rio T."/>
            <person name="Dalin E."/>
            <person name="Tice H."/>
            <person name="Bruce D."/>
            <person name="Goodwin L."/>
            <person name="Pitluck S."/>
            <person name="Sims D."/>
            <person name="Brettin T."/>
            <person name="Detter J.C."/>
            <person name="Han C."/>
            <person name="Kuske C.R."/>
            <person name="Schmutz J."/>
            <person name="Larimer F."/>
            <person name="Land M."/>
            <person name="Hauser L."/>
            <person name="Kyrpides N."/>
            <person name="Kim E."/>
            <person name="Zhao J.-S."/>
            <person name="Richardson P."/>
        </authorList>
    </citation>
    <scope>NUCLEOTIDE SEQUENCE [LARGE SCALE GENOMIC DNA]</scope>
    <source>
        <strain>HAW-EB4</strain>
    </source>
</reference>
<feature type="chain" id="PRO_1000080268" description="Large ribosomal subunit protein bL34">
    <location>
        <begin position="1"/>
        <end position="45"/>
    </location>
</feature>
<feature type="region of interest" description="Disordered" evidence="2">
    <location>
        <begin position="1"/>
        <end position="21"/>
    </location>
</feature>
<feature type="compositionally biased region" description="Polar residues" evidence="2">
    <location>
        <begin position="1"/>
        <end position="10"/>
    </location>
</feature>
<feature type="compositionally biased region" description="Basic residues" evidence="2">
    <location>
        <begin position="11"/>
        <end position="20"/>
    </location>
</feature>
<proteinExistence type="inferred from homology"/>
<gene>
    <name evidence="1" type="primary">rpmH</name>
    <name type="ordered locus">Shal_4314</name>
</gene>
<comment type="similarity">
    <text evidence="1">Belongs to the bacterial ribosomal protein bL34 family.</text>
</comment>
<protein>
    <recommendedName>
        <fullName evidence="1">Large ribosomal subunit protein bL34</fullName>
    </recommendedName>
    <alternativeName>
        <fullName evidence="3">50S ribosomal protein L34</fullName>
    </alternativeName>
</protein>
<accession>B0TQH4</accession>
<organism>
    <name type="scientific">Shewanella halifaxensis (strain HAW-EB4)</name>
    <dbReference type="NCBI Taxonomy" id="458817"/>
    <lineage>
        <taxon>Bacteria</taxon>
        <taxon>Pseudomonadati</taxon>
        <taxon>Pseudomonadota</taxon>
        <taxon>Gammaproteobacteria</taxon>
        <taxon>Alteromonadales</taxon>
        <taxon>Shewanellaceae</taxon>
        <taxon>Shewanella</taxon>
    </lineage>
</organism>
<sequence>MSKRTFQPSNLKRKRSHGFRARMATVGGRKVIARRRAKGRARLSA</sequence>
<evidence type="ECO:0000255" key="1">
    <source>
        <dbReference type="HAMAP-Rule" id="MF_00391"/>
    </source>
</evidence>
<evidence type="ECO:0000256" key="2">
    <source>
        <dbReference type="SAM" id="MobiDB-lite"/>
    </source>
</evidence>
<evidence type="ECO:0000305" key="3"/>
<name>RL34_SHEHH</name>
<keyword id="KW-0687">Ribonucleoprotein</keyword>
<keyword id="KW-0689">Ribosomal protein</keyword>
<dbReference type="EMBL" id="CP000931">
    <property type="protein sequence ID" value="ABZ78854.1"/>
    <property type="molecule type" value="Genomic_DNA"/>
</dbReference>
<dbReference type="RefSeq" id="WP_011867659.1">
    <property type="nucleotide sequence ID" value="NC_010334.1"/>
</dbReference>
<dbReference type="SMR" id="B0TQH4"/>
<dbReference type="STRING" id="458817.Shal_4314"/>
<dbReference type="KEGG" id="shl:Shal_4314"/>
<dbReference type="eggNOG" id="COG0230">
    <property type="taxonomic scope" value="Bacteria"/>
</dbReference>
<dbReference type="HOGENOM" id="CLU_129938_2_0_6"/>
<dbReference type="OrthoDB" id="9804164at2"/>
<dbReference type="Proteomes" id="UP000001317">
    <property type="component" value="Chromosome"/>
</dbReference>
<dbReference type="GO" id="GO:1990904">
    <property type="term" value="C:ribonucleoprotein complex"/>
    <property type="evidence" value="ECO:0007669"/>
    <property type="project" value="UniProtKB-KW"/>
</dbReference>
<dbReference type="GO" id="GO:0005840">
    <property type="term" value="C:ribosome"/>
    <property type="evidence" value="ECO:0007669"/>
    <property type="project" value="UniProtKB-KW"/>
</dbReference>
<dbReference type="GO" id="GO:0003735">
    <property type="term" value="F:structural constituent of ribosome"/>
    <property type="evidence" value="ECO:0007669"/>
    <property type="project" value="InterPro"/>
</dbReference>
<dbReference type="GO" id="GO:0006412">
    <property type="term" value="P:translation"/>
    <property type="evidence" value="ECO:0007669"/>
    <property type="project" value="UniProtKB-UniRule"/>
</dbReference>
<dbReference type="FunFam" id="1.10.287.3980:FF:000001">
    <property type="entry name" value="Mitochondrial ribosomal protein L34"/>
    <property type="match status" value="1"/>
</dbReference>
<dbReference type="Gene3D" id="1.10.287.3980">
    <property type="match status" value="1"/>
</dbReference>
<dbReference type="HAMAP" id="MF_00391">
    <property type="entry name" value="Ribosomal_bL34"/>
    <property type="match status" value="1"/>
</dbReference>
<dbReference type="InterPro" id="IPR000271">
    <property type="entry name" value="Ribosomal_bL34"/>
</dbReference>
<dbReference type="InterPro" id="IPR020939">
    <property type="entry name" value="Ribosomal_bL34_CS"/>
</dbReference>
<dbReference type="NCBIfam" id="TIGR01030">
    <property type="entry name" value="rpmH_bact"/>
    <property type="match status" value="1"/>
</dbReference>
<dbReference type="PANTHER" id="PTHR14503:SF4">
    <property type="entry name" value="LARGE RIBOSOMAL SUBUNIT PROTEIN BL34M"/>
    <property type="match status" value="1"/>
</dbReference>
<dbReference type="PANTHER" id="PTHR14503">
    <property type="entry name" value="MITOCHONDRIAL RIBOSOMAL PROTEIN 34 FAMILY MEMBER"/>
    <property type="match status" value="1"/>
</dbReference>
<dbReference type="Pfam" id="PF00468">
    <property type="entry name" value="Ribosomal_L34"/>
    <property type="match status" value="1"/>
</dbReference>
<dbReference type="PROSITE" id="PS00784">
    <property type="entry name" value="RIBOSOMAL_L34"/>
    <property type="match status" value="1"/>
</dbReference>